<keyword id="KW-0249">Electron transport</keyword>
<keyword id="KW-0349">Heme</keyword>
<keyword id="KW-0408">Iron</keyword>
<keyword id="KW-0472">Membrane</keyword>
<keyword id="KW-0479">Metal-binding</keyword>
<keyword id="KW-0496">Mitochondrion</keyword>
<keyword id="KW-0999">Mitochondrion inner membrane</keyword>
<keyword id="KW-0679">Respiratory chain</keyword>
<keyword id="KW-0812">Transmembrane</keyword>
<keyword id="KW-1133">Transmembrane helix</keyword>
<keyword id="KW-0813">Transport</keyword>
<keyword id="KW-0830">Ubiquinone</keyword>
<organism>
    <name type="scientific">Dasyurus hallucatus</name>
    <name type="common">Northern quoll</name>
    <name type="synonym">Satanellus hallucatus</name>
    <dbReference type="NCBI Taxonomy" id="9280"/>
    <lineage>
        <taxon>Eukaryota</taxon>
        <taxon>Metazoa</taxon>
        <taxon>Chordata</taxon>
        <taxon>Craniata</taxon>
        <taxon>Vertebrata</taxon>
        <taxon>Euteleostomi</taxon>
        <taxon>Mammalia</taxon>
        <taxon>Metatheria</taxon>
        <taxon>Dasyuromorphia</taxon>
        <taxon>Dasyuridae</taxon>
        <taxon>Dasyurus</taxon>
    </lineage>
</organism>
<geneLocation type="mitochondrion"/>
<dbReference type="EMBL" id="M99460">
    <property type="protein sequence ID" value="AAB40405.1"/>
    <property type="molecule type" value="Genomic_DNA"/>
</dbReference>
<dbReference type="SMR" id="Q34321"/>
<dbReference type="GO" id="GO:0005743">
    <property type="term" value="C:mitochondrial inner membrane"/>
    <property type="evidence" value="ECO:0007669"/>
    <property type="project" value="UniProtKB-SubCell"/>
</dbReference>
<dbReference type="GO" id="GO:0045275">
    <property type="term" value="C:respiratory chain complex III"/>
    <property type="evidence" value="ECO:0007669"/>
    <property type="project" value="InterPro"/>
</dbReference>
<dbReference type="GO" id="GO:0046872">
    <property type="term" value="F:metal ion binding"/>
    <property type="evidence" value="ECO:0007669"/>
    <property type="project" value="UniProtKB-KW"/>
</dbReference>
<dbReference type="GO" id="GO:0008121">
    <property type="term" value="F:ubiquinol-cytochrome-c reductase activity"/>
    <property type="evidence" value="ECO:0007669"/>
    <property type="project" value="InterPro"/>
</dbReference>
<dbReference type="GO" id="GO:0006122">
    <property type="term" value="P:mitochondrial electron transport, ubiquinol to cytochrome c"/>
    <property type="evidence" value="ECO:0007669"/>
    <property type="project" value="TreeGrafter"/>
</dbReference>
<dbReference type="CDD" id="cd00290">
    <property type="entry name" value="cytochrome_b_C"/>
    <property type="match status" value="1"/>
</dbReference>
<dbReference type="CDD" id="cd00284">
    <property type="entry name" value="Cytochrome_b_N"/>
    <property type="match status" value="1"/>
</dbReference>
<dbReference type="FunFam" id="1.20.810.10:FF:000002">
    <property type="entry name" value="Cytochrome b"/>
    <property type="match status" value="1"/>
</dbReference>
<dbReference type="Gene3D" id="1.20.810.10">
    <property type="entry name" value="Cytochrome Bc1 Complex, Chain C"/>
    <property type="match status" value="1"/>
</dbReference>
<dbReference type="InterPro" id="IPR005798">
    <property type="entry name" value="Cyt_b/b6_C"/>
</dbReference>
<dbReference type="InterPro" id="IPR036150">
    <property type="entry name" value="Cyt_b/b6_C_sf"/>
</dbReference>
<dbReference type="InterPro" id="IPR005797">
    <property type="entry name" value="Cyt_b/b6_N"/>
</dbReference>
<dbReference type="InterPro" id="IPR027387">
    <property type="entry name" value="Cytb/b6-like_sf"/>
</dbReference>
<dbReference type="InterPro" id="IPR030689">
    <property type="entry name" value="Cytochrome_b"/>
</dbReference>
<dbReference type="InterPro" id="IPR048260">
    <property type="entry name" value="Cytochrome_b_C_euk/bac"/>
</dbReference>
<dbReference type="InterPro" id="IPR048259">
    <property type="entry name" value="Cytochrome_b_N_euk/bac"/>
</dbReference>
<dbReference type="InterPro" id="IPR016174">
    <property type="entry name" value="Di-haem_cyt_TM"/>
</dbReference>
<dbReference type="PANTHER" id="PTHR19271">
    <property type="entry name" value="CYTOCHROME B"/>
    <property type="match status" value="1"/>
</dbReference>
<dbReference type="PANTHER" id="PTHR19271:SF16">
    <property type="entry name" value="CYTOCHROME B"/>
    <property type="match status" value="1"/>
</dbReference>
<dbReference type="Pfam" id="PF00032">
    <property type="entry name" value="Cytochrom_B_C"/>
    <property type="match status" value="1"/>
</dbReference>
<dbReference type="Pfam" id="PF00033">
    <property type="entry name" value="Cytochrome_B"/>
    <property type="match status" value="1"/>
</dbReference>
<dbReference type="PIRSF" id="PIRSF038885">
    <property type="entry name" value="COB"/>
    <property type="match status" value="1"/>
</dbReference>
<dbReference type="SUPFAM" id="SSF81648">
    <property type="entry name" value="a domain/subunit of cytochrome bc1 complex (Ubiquinol-cytochrome c reductase)"/>
    <property type="match status" value="1"/>
</dbReference>
<dbReference type="SUPFAM" id="SSF81342">
    <property type="entry name" value="Transmembrane di-heme cytochromes"/>
    <property type="match status" value="1"/>
</dbReference>
<dbReference type="PROSITE" id="PS51003">
    <property type="entry name" value="CYTB_CTER"/>
    <property type="match status" value="1"/>
</dbReference>
<dbReference type="PROSITE" id="PS51002">
    <property type="entry name" value="CYTB_NTER"/>
    <property type="match status" value="1"/>
</dbReference>
<evidence type="ECO:0000250" key="1"/>
<evidence type="ECO:0000250" key="2">
    <source>
        <dbReference type="UniProtKB" id="P00157"/>
    </source>
</evidence>
<evidence type="ECO:0000255" key="3">
    <source>
        <dbReference type="PROSITE-ProRule" id="PRU00967"/>
    </source>
</evidence>
<evidence type="ECO:0000255" key="4">
    <source>
        <dbReference type="PROSITE-ProRule" id="PRU00968"/>
    </source>
</evidence>
<comment type="function">
    <text evidence="2">Component of the ubiquinol-cytochrome c reductase complex (complex III or cytochrome b-c1 complex) that is part of the mitochondrial respiratory chain. The b-c1 complex mediates electron transfer from ubiquinol to cytochrome c. Contributes to the generation of a proton gradient across the mitochondrial membrane that is then used for ATP synthesis.</text>
</comment>
<comment type="cofactor">
    <cofactor evidence="2">
        <name>heme b</name>
        <dbReference type="ChEBI" id="CHEBI:60344"/>
    </cofactor>
    <text evidence="2">Binds 2 heme b groups non-covalently.</text>
</comment>
<comment type="subunit">
    <text evidence="2">The cytochrome bc1 complex contains 11 subunits: 3 respiratory subunits (MT-CYB, CYC1 and UQCRFS1), 2 core proteins (UQCRC1 and UQCRC2) and 6 low-molecular weight proteins (UQCRH/QCR6, UQCRB/QCR7, UQCRQ/QCR8, UQCR10/QCR9, UQCR11/QCR10 and a cleavage product of UQCRFS1). This cytochrome bc1 complex then forms a dimer.</text>
</comment>
<comment type="subcellular location">
    <subcellularLocation>
        <location evidence="2">Mitochondrion inner membrane</location>
        <topology evidence="2">Multi-pass membrane protein</topology>
    </subcellularLocation>
</comment>
<comment type="miscellaneous">
    <text evidence="1">Heme 1 (or BL or b562) is low-potential and absorbs at about 562 nm, and heme 2 (or BH or b566) is high-potential and absorbs at about 566 nm.</text>
</comment>
<comment type="similarity">
    <text evidence="3 4">Belongs to the cytochrome b family.</text>
</comment>
<comment type="caution">
    <text evidence="2">The full-length protein contains only eight transmembrane helices, not nine as predicted by bioinformatics tools.</text>
</comment>
<accession>Q34321</accession>
<feature type="chain" id="PRO_0000060865" description="Cytochrome b">
    <location>
        <begin position="1"/>
        <end position="381"/>
    </location>
</feature>
<feature type="transmembrane region" description="Helical" evidence="2">
    <location>
        <begin position="33"/>
        <end position="53"/>
    </location>
</feature>
<feature type="transmembrane region" description="Helical" evidence="2">
    <location>
        <begin position="77"/>
        <end position="98"/>
    </location>
</feature>
<feature type="transmembrane region" description="Helical" evidence="2">
    <location>
        <begin position="113"/>
        <end position="133"/>
    </location>
</feature>
<feature type="transmembrane region" description="Helical" evidence="2">
    <location>
        <begin position="178"/>
        <end position="198"/>
    </location>
</feature>
<feature type="transmembrane region" description="Helical" evidence="2">
    <location>
        <begin position="226"/>
        <end position="246"/>
    </location>
</feature>
<feature type="transmembrane region" description="Helical" evidence="2">
    <location>
        <begin position="288"/>
        <end position="308"/>
    </location>
</feature>
<feature type="transmembrane region" description="Helical" evidence="2">
    <location>
        <begin position="320"/>
        <end position="340"/>
    </location>
</feature>
<feature type="transmembrane region" description="Helical" evidence="2">
    <location>
        <begin position="347"/>
        <end position="367"/>
    </location>
</feature>
<feature type="binding site" description="axial binding residue" evidence="2">
    <location>
        <position position="83"/>
    </location>
    <ligand>
        <name>heme b</name>
        <dbReference type="ChEBI" id="CHEBI:60344"/>
        <label>b562</label>
    </ligand>
    <ligandPart>
        <name>Fe</name>
        <dbReference type="ChEBI" id="CHEBI:18248"/>
    </ligandPart>
</feature>
<feature type="binding site" description="axial binding residue" evidence="2">
    <location>
        <position position="97"/>
    </location>
    <ligand>
        <name>heme b</name>
        <dbReference type="ChEBI" id="CHEBI:60344"/>
        <label>b566</label>
    </ligand>
    <ligandPart>
        <name>Fe</name>
        <dbReference type="ChEBI" id="CHEBI:18248"/>
    </ligandPart>
</feature>
<feature type="binding site" description="axial binding residue" evidence="2">
    <location>
        <position position="182"/>
    </location>
    <ligand>
        <name>heme b</name>
        <dbReference type="ChEBI" id="CHEBI:60344"/>
        <label>b562</label>
    </ligand>
    <ligandPart>
        <name>Fe</name>
        <dbReference type="ChEBI" id="CHEBI:18248"/>
    </ligandPart>
</feature>
<feature type="binding site" description="axial binding residue" evidence="2">
    <location>
        <position position="196"/>
    </location>
    <ligand>
        <name>heme b</name>
        <dbReference type="ChEBI" id="CHEBI:60344"/>
        <label>b566</label>
    </ligand>
    <ligandPart>
        <name>Fe</name>
        <dbReference type="ChEBI" id="CHEBI:18248"/>
    </ligandPart>
</feature>
<feature type="binding site" evidence="2">
    <location>
        <position position="201"/>
    </location>
    <ligand>
        <name>a ubiquinone</name>
        <dbReference type="ChEBI" id="CHEBI:16389"/>
    </ligand>
</feature>
<proteinExistence type="inferred from homology"/>
<name>CYB_DASHA</name>
<reference key="1">
    <citation type="journal article" date="1992" name="Proc. R. Soc. B">
        <title>Phylogenetic relationships of the thylacine (Mammalia: Thylacinidae) among dasyuroid marsupials: evidence from cytochrome b DNA sequences.</title>
        <authorList>
            <person name="Krajewski C."/>
            <person name="Driskell A.C."/>
            <person name="Baverstock P.R."/>
            <person name="Braun M.J."/>
        </authorList>
    </citation>
    <scope>NUCLEOTIDE SEQUENCE [GENOMIC DNA]</scope>
</reference>
<protein>
    <recommendedName>
        <fullName>Cytochrome b</fullName>
    </recommendedName>
    <alternativeName>
        <fullName>Complex III subunit 3</fullName>
    </alternativeName>
    <alternativeName>
        <fullName>Complex III subunit III</fullName>
    </alternativeName>
    <alternativeName>
        <fullName>Cytochrome b-c1 complex subunit 3</fullName>
    </alternativeName>
    <alternativeName>
        <fullName>Ubiquinol-cytochrome-c reductase complex cytochrome b subunit</fullName>
    </alternativeName>
</protein>
<sequence>MINMRKTHPLMKIINHSFIDLPTPSNISAWWNFGSLLGMCLIIQILTGLFLAMHYTSDTLTAFSSVAHICRDVNHGWLLRNLHANGASMFFMCLFLHVGRGIYYGSYLYKETWNIGVILLLTVMATAFVGYVLPWGQMSFWGATVITNLLSAIPYIGTTLAEWIWGGFAVDKATLTRFFAFHFILPFIIMALAVVHLLFLHETGSNNPSGINPDSDKIPFHPYYTIKDALGFMLLLLVLLLLALFSPDLLGDPDNFSPANPLNTPPHIKPEWYFLFAYAILRSIPNKLGGVLAVLASILILLIIPLLHTANQRSMMFRPVSQTLFWILTANLITLTWIGGHPVEQPFIIIGQLAPMPYFLLILVMMPLAGLFENYMLKPEW</sequence>
<gene>
    <name type="primary">MT-CYB</name>
    <name type="synonym">COB</name>
    <name type="synonym">CYTB</name>
    <name type="synonym">MTCYB</name>
</gene>